<proteinExistence type="inferred from homology"/>
<gene>
    <name evidence="1" type="primary">hrcA</name>
    <name type="ordered locus">PPA0915</name>
</gene>
<dbReference type="EMBL" id="AE017283">
    <property type="protein sequence ID" value="AAT82668.1"/>
    <property type="molecule type" value="Genomic_DNA"/>
</dbReference>
<dbReference type="RefSeq" id="WP_002513807.1">
    <property type="nucleotide sequence ID" value="NZ_CP025935.1"/>
</dbReference>
<dbReference type="SMR" id="Q6A998"/>
<dbReference type="EnsemblBacteria" id="AAT82668">
    <property type="protein sequence ID" value="AAT82668"/>
    <property type="gene ID" value="PPA0915"/>
</dbReference>
<dbReference type="KEGG" id="pac:PPA0915"/>
<dbReference type="eggNOG" id="COG1420">
    <property type="taxonomic scope" value="Bacteria"/>
</dbReference>
<dbReference type="HOGENOM" id="CLU_050019_2_0_11"/>
<dbReference type="Proteomes" id="UP000000603">
    <property type="component" value="Chromosome"/>
</dbReference>
<dbReference type="GO" id="GO:0003677">
    <property type="term" value="F:DNA binding"/>
    <property type="evidence" value="ECO:0007669"/>
    <property type="project" value="InterPro"/>
</dbReference>
<dbReference type="GO" id="GO:0003700">
    <property type="term" value="F:DNA-binding transcription factor activity"/>
    <property type="evidence" value="ECO:0007669"/>
    <property type="project" value="InterPro"/>
</dbReference>
<dbReference type="GO" id="GO:0045892">
    <property type="term" value="P:negative regulation of DNA-templated transcription"/>
    <property type="evidence" value="ECO:0007669"/>
    <property type="project" value="UniProtKB-UniRule"/>
</dbReference>
<dbReference type="FunFam" id="1.10.10.10:FF:000049">
    <property type="entry name" value="Heat-inducible transcription repressor HrcA"/>
    <property type="match status" value="1"/>
</dbReference>
<dbReference type="Gene3D" id="3.30.450.40">
    <property type="match status" value="1"/>
</dbReference>
<dbReference type="Gene3D" id="3.30.390.60">
    <property type="entry name" value="Heat-inducible transcription repressor hrca homolog, domain 3"/>
    <property type="match status" value="1"/>
</dbReference>
<dbReference type="Gene3D" id="1.10.10.10">
    <property type="entry name" value="Winged helix-like DNA-binding domain superfamily/Winged helix DNA-binding domain"/>
    <property type="match status" value="1"/>
</dbReference>
<dbReference type="HAMAP" id="MF_00081">
    <property type="entry name" value="HrcA"/>
    <property type="match status" value="1"/>
</dbReference>
<dbReference type="InterPro" id="IPR001034">
    <property type="entry name" value="DeoR_HTH"/>
</dbReference>
<dbReference type="InterPro" id="IPR029016">
    <property type="entry name" value="GAF-like_dom_sf"/>
</dbReference>
<dbReference type="InterPro" id="IPR002571">
    <property type="entry name" value="HrcA"/>
</dbReference>
<dbReference type="InterPro" id="IPR021153">
    <property type="entry name" value="HrcA_C"/>
</dbReference>
<dbReference type="InterPro" id="IPR036388">
    <property type="entry name" value="WH-like_DNA-bd_sf"/>
</dbReference>
<dbReference type="InterPro" id="IPR036390">
    <property type="entry name" value="WH_DNA-bd_sf"/>
</dbReference>
<dbReference type="InterPro" id="IPR023120">
    <property type="entry name" value="WHTH_transcript_rep_HrcA_IDD"/>
</dbReference>
<dbReference type="NCBIfam" id="TIGR00331">
    <property type="entry name" value="hrcA"/>
    <property type="match status" value="1"/>
</dbReference>
<dbReference type="PANTHER" id="PTHR34824">
    <property type="entry name" value="HEAT-INDUCIBLE TRANSCRIPTION REPRESSOR HRCA"/>
    <property type="match status" value="1"/>
</dbReference>
<dbReference type="PANTHER" id="PTHR34824:SF1">
    <property type="entry name" value="HEAT-INDUCIBLE TRANSCRIPTION REPRESSOR HRCA"/>
    <property type="match status" value="1"/>
</dbReference>
<dbReference type="Pfam" id="PF01628">
    <property type="entry name" value="HrcA"/>
    <property type="match status" value="1"/>
</dbReference>
<dbReference type="Pfam" id="PF08220">
    <property type="entry name" value="HTH_DeoR"/>
    <property type="match status" value="1"/>
</dbReference>
<dbReference type="PIRSF" id="PIRSF005485">
    <property type="entry name" value="HrcA"/>
    <property type="match status" value="1"/>
</dbReference>
<dbReference type="SUPFAM" id="SSF55781">
    <property type="entry name" value="GAF domain-like"/>
    <property type="match status" value="1"/>
</dbReference>
<dbReference type="SUPFAM" id="SSF46785">
    <property type="entry name" value="Winged helix' DNA-binding domain"/>
    <property type="match status" value="1"/>
</dbReference>
<keyword id="KW-0678">Repressor</keyword>
<keyword id="KW-0346">Stress response</keyword>
<keyword id="KW-0804">Transcription</keyword>
<keyword id="KW-0805">Transcription regulation</keyword>
<organism>
    <name type="scientific">Cutibacterium acnes (strain DSM 16379 / KPA171202)</name>
    <name type="common">Propionibacterium acnes</name>
    <dbReference type="NCBI Taxonomy" id="267747"/>
    <lineage>
        <taxon>Bacteria</taxon>
        <taxon>Bacillati</taxon>
        <taxon>Actinomycetota</taxon>
        <taxon>Actinomycetes</taxon>
        <taxon>Propionibacteriales</taxon>
        <taxon>Propionibacteriaceae</taxon>
        <taxon>Cutibacterium</taxon>
    </lineage>
</organism>
<name>HRCA_CUTAK</name>
<reference key="1">
    <citation type="journal article" date="2004" name="Science">
        <title>The complete genome sequence of Propionibacterium acnes, a commensal of human skin.</title>
        <authorList>
            <person name="Brueggemann H."/>
            <person name="Henne A."/>
            <person name="Hoster F."/>
            <person name="Liesegang H."/>
            <person name="Wiezer A."/>
            <person name="Strittmatter A."/>
            <person name="Hujer S."/>
            <person name="Duerre P."/>
            <person name="Gottschalk G."/>
        </authorList>
    </citation>
    <scope>NUCLEOTIDE SEQUENCE [LARGE SCALE GENOMIC DNA]</scope>
    <source>
        <strain>DSM 16379 / KPA171202</strain>
    </source>
</reference>
<protein>
    <recommendedName>
        <fullName evidence="1">Heat-inducible transcription repressor HrcA</fullName>
    </recommendedName>
</protein>
<sequence length="339" mass="36421">MLDDRKLDVLKAIVTDYVSSKEPVGSKALVERHGLRVSPATVRNDMAVLEEEGYITHPHTSAGRIPTDKGYRLFVDRIATLKPLSAPERRAIQAFMTGAVDLDDIVRRTVRLLAQITHQVAIMQYPVATTGTIRHLELVSLSTDRILIVLIMSSGSVEQQIVELPGHDEQSLAALRTRLNETLVGLTVAEAADSLNRFLDDLGPAEGPRAASVIATVLEILAVDPSARVVVAGVPNLTAFGAQWETAVRPVLEALEEQVVLMRLLGEATAGEAGEVTVRIGAENTDVPFQSTSLVASTYGPEDALSSLGVVGPIRMDYPSTMAAVRAVARYVGRFLAEG</sequence>
<accession>Q6A998</accession>
<comment type="function">
    <text evidence="1">Negative regulator of class I heat shock genes (grpE-dnaK-dnaJ and groELS operons). Prevents heat-shock induction of these operons.</text>
</comment>
<comment type="similarity">
    <text evidence="1">Belongs to the HrcA family.</text>
</comment>
<evidence type="ECO:0000255" key="1">
    <source>
        <dbReference type="HAMAP-Rule" id="MF_00081"/>
    </source>
</evidence>
<feature type="chain" id="PRO_0000182519" description="Heat-inducible transcription repressor HrcA">
    <location>
        <begin position="1"/>
        <end position="339"/>
    </location>
</feature>